<dbReference type="EMBL" id="AJ313161">
    <property type="protein sequence ID" value="CAC85634.1"/>
    <property type="molecule type" value="mRNA"/>
</dbReference>
<dbReference type="EMBL" id="AJ313162">
    <property type="protein sequence ID" value="CAC85635.1"/>
    <property type="molecule type" value="mRNA"/>
</dbReference>
<dbReference type="EMBL" id="AY040566">
    <property type="protein sequence ID" value="AAK85714.1"/>
    <property type="molecule type" value="mRNA"/>
</dbReference>
<dbReference type="EMBL" id="AY040567">
    <property type="protein sequence ID" value="AAK85715.1"/>
    <property type="molecule type" value="mRNA"/>
</dbReference>
<dbReference type="EMBL" id="AY040568">
    <property type="protein sequence ID" value="AAK85716.1"/>
    <property type="molecule type" value="mRNA"/>
</dbReference>
<dbReference type="EMBL" id="AJ297262">
    <property type="protein sequence ID" value="CAC83097.1"/>
    <property type="molecule type" value="mRNA"/>
</dbReference>
<dbReference type="EMBL" id="AY044429">
    <property type="protein sequence ID" value="AAK91775.1"/>
    <property type="molecule type" value="mRNA"/>
</dbReference>
<dbReference type="EMBL" id="AY358111">
    <property type="protein sequence ID" value="AAQ88478.1"/>
    <property type="molecule type" value="mRNA"/>
</dbReference>
<dbReference type="EMBL" id="AY358737">
    <property type="protein sequence ID" value="AAQ89097.1"/>
    <property type="status" value="ALT_INIT"/>
    <property type="molecule type" value="mRNA"/>
</dbReference>
<dbReference type="EMBL" id="AY779023">
    <property type="protein sequence ID" value="AAV31775.1"/>
    <property type="molecule type" value="Genomic_DNA"/>
</dbReference>
<dbReference type="EMBL" id="AL050337">
    <property type="status" value="NOT_ANNOTATED_CDS"/>
    <property type="molecule type" value="Genomic_DNA"/>
</dbReference>
<dbReference type="EMBL" id="CH471051">
    <property type="protein sequence ID" value="EAW47933.1"/>
    <property type="molecule type" value="Genomic_DNA"/>
</dbReference>
<dbReference type="EMBL" id="BC125167">
    <property type="protein sequence ID" value="AAI25168.1"/>
    <property type="molecule type" value="mRNA"/>
</dbReference>
<dbReference type="EMBL" id="BC125168">
    <property type="protein sequence ID" value="AAI25169.1"/>
    <property type="molecule type" value="mRNA"/>
</dbReference>
<dbReference type="CCDS" id="CCDS5182.1">
    <molecule id="Q969J5-1"/>
</dbReference>
<dbReference type="CCDS" id="CCDS5183.1">
    <molecule id="Q969J5-2"/>
</dbReference>
<dbReference type="CCDS" id="CCDS5184.1">
    <molecule id="Q969J5-3"/>
</dbReference>
<dbReference type="RefSeq" id="NP_443194.1">
    <molecule id="Q969J5-1"/>
    <property type="nucleotide sequence ID" value="NM_052962.3"/>
</dbReference>
<dbReference type="RefSeq" id="NP_851826.1">
    <molecule id="Q969J5-2"/>
    <property type="nucleotide sequence ID" value="NM_181309.2"/>
</dbReference>
<dbReference type="RefSeq" id="NP_851827.1">
    <molecule id="Q969J5-3"/>
    <property type="nucleotide sequence ID" value="NM_181310.2"/>
</dbReference>
<dbReference type="PDB" id="3G9V">
    <property type="method" value="X-ray"/>
    <property type="resolution" value="2.76 A"/>
    <property type="chains" value="A/C=21-263"/>
</dbReference>
<dbReference type="PDBsum" id="3G9V"/>
<dbReference type="SMR" id="Q969J5"/>
<dbReference type="BioGRID" id="125503">
    <property type="interactions" value="20"/>
</dbReference>
<dbReference type="ComplexPortal" id="CPX-10309">
    <property type="entry name" value="Interleukin-22 decoy receptor complex"/>
</dbReference>
<dbReference type="DIP" id="DIP-46036N"/>
<dbReference type="FunCoup" id="Q969J5">
    <property type="interactions" value="316"/>
</dbReference>
<dbReference type="IntAct" id="Q969J5">
    <property type="interactions" value="15"/>
</dbReference>
<dbReference type="STRING" id="9606.ENSP00000296980"/>
<dbReference type="BindingDB" id="Q969J5"/>
<dbReference type="GlyCosmos" id="Q969J5">
    <property type="glycosylation" value="1 site, No reported glycans"/>
</dbReference>
<dbReference type="GlyGen" id="Q969J5">
    <property type="glycosylation" value="5 sites"/>
</dbReference>
<dbReference type="PhosphoSitePlus" id="Q969J5"/>
<dbReference type="BioMuta" id="IL22RA2"/>
<dbReference type="DMDM" id="61213728"/>
<dbReference type="MassIVE" id="Q969J5"/>
<dbReference type="PaxDb" id="9606-ENSP00000296980"/>
<dbReference type="PeptideAtlas" id="Q969J5"/>
<dbReference type="ProteomicsDB" id="75775">
    <molecule id="Q969J5-1"/>
</dbReference>
<dbReference type="ProteomicsDB" id="75776">
    <molecule id="Q969J5-2"/>
</dbReference>
<dbReference type="Antibodypedia" id="19779">
    <property type="antibodies" value="377 antibodies from 36 providers"/>
</dbReference>
<dbReference type="DNASU" id="116379"/>
<dbReference type="Ensembl" id="ENST00000296980.7">
    <molecule id="Q969J5-1"/>
    <property type="protein sequence ID" value="ENSP00000296980.2"/>
    <property type="gene ID" value="ENSG00000164485.15"/>
</dbReference>
<dbReference type="Ensembl" id="ENST00000339602.3">
    <molecule id="Q969J5-3"/>
    <property type="protein sequence ID" value="ENSP00000340920.3"/>
    <property type="gene ID" value="ENSG00000164485.15"/>
</dbReference>
<dbReference type="Ensembl" id="ENST00000349184.9">
    <molecule id="Q969J5-2"/>
    <property type="protein sequence ID" value="ENSP00000296979.4"/>
    <property type="gene ID" value="ENSG00000164485.15"/>
</dbReference>
<dbReference type="GeneID" id="116379"/>
<dbReference type="KEGG" id="hsa:116379"/>
<dbReference type="MANE-Select" id="ENST00000296980.7">
    <property type="protein sequence ID" value="ENSP00000296980.2"/>
    <property type="RefSeq nucleotide sequence ID" value="NM_052962.3"/>
    <property type="RefSeq protein sequence ID" value="NP_443194.1"/>
</dbReference>
<dbReference type="UCSC" id="uc003qhl.4">
    <molecule id="Q969J5-1"/>
    <property type="organism name" value="human"/>
</dbReference>
<dbReference type="AGR" id="HGNC:14901"/>
<dbReference type="CTD" id="116379"/>
<dbReference type="DisGeNET" id="116379"/>
<dbReference type="GeneCards" id="IL22RA2"/>
<dbReference type="HGNC" id="HGNC:14901">
    <property type="gene designation" value="IL22RA2"/>
</dbReference>
<dbReference type="HPA" id="ENSG00000164485">
    <property type="expression patterns" value="Group enriched (breast, lymphoid tissue)"/>
</dbReference>
<dbReference type="MIM" id="606648">
    <property type="type" value="gene"/>
</dbReference>
<dbReference type="neXtProt" id="NX_Q969J5"/>
<dbReference type="OpenTargets" id="ENSG00000164485"/>
<dbReference type="PharmGKB" id="PA134983729"/>
<dbReference type="VEuPathDB" id="HostDB:ENSG00000164485"/>
<dbReference type="eggNOG" id="ENOG502S2NT">
    <property type="taxonomic scope" value="Eukaryota"/>
</dbReference>
<dbReference type="GeneTree" id="ENSGT00940000161124"/>
<dbReference type="HOGENOM" id="CLU_081158_1_0_1"/>
<dbReference type="InParanoid" id="Q969J5"/>
<dbReference type="OMA" id="SMENYYE"/>
<dbReference type="OrthoDB" id="10007376at2759"/>
<dbReference type="PAN-GO" id="Q969J5">
    <property type="GO annotations" value="3 GO annotations based on evolutionary models"/>
</dbReference>
<dbReference type="PhylomeDB" id="Q969J5"/>
<dbReference type="TreeFam" id="TF332537"/>
<dbReference type="PathwayCommons" id="Q969J5"/>
<dbReference type="Reactome" id="R-HSA-8854691">
    <property type="pathway name" value="Interleukin-20 family signaling"/>
</dbReference>
<dbReference type="SignaLink" id="Q969J5"/>
<dbReference type="SIGNOR" id="Q969J5"/>
<dbReference type="BioGRID-ORCS" id="116379">
    <property type="hits" value="9 hits in 1151 CRISPR screens"/>
</dbReference>
<dbReference type="ChiTaRS" id="IL22RA2">
    <property type="organism name" value="human"/>
</dbReference>
<dbReference type="EvolutionaryTrace" id="Q969J5"/>
<dbReference type="GenomeRNAi" id="116379"/>
<dbReference type="Pharos" id="Q969J5">
    <property type="development level" value="Tbio"/>
</dbReference>
<dbReference type="PRO" id="PR:Q969J5"/>
<dbReference type="Proteomes" id="UP000005640">
    <property type="component" value="Chromosome 6"/>
</dbReference>
<dbReference type="RNAct" id="Q969J5">
    <property type="molecule type" value="protein"/>
</dbReference>
<dbReference type="Bgee" id="ENSG00000164485">
    <property type="expression patterns" value="Expressed in vermiform appendix and 28 other cell types or tissues"/>
</dbReference>
<dbReference type="GO" id="GO:0005829">
    <property type="term" value="C:cytosol"/>
    <property type="evidence" value="ECO:0007669"/>
    <property type="project" value="Ensembl"/>
</dbReference>
<dbReference type="GO" id="GO:0005576">
    <property type="term" value="C:extracellular region"/>
    <property type="evidence" value="ECO:0000304"/>
    <property type="project" value="Reactome"/>
</dbReference>
<dbReference type="GO" id="GO:0005615">
    <property type="term" value="C:extracellular space"/>
    <property type="evidence" value="ECO:0000303"/>
    <property type="project" value="UniProtKB"/>
</dbReference>
<dbReference type="GO" id="GO:0005886">
    <property type="term" value="C:plasma membrane"/>
    <property type="evidence" value="ECO:0000318"/>
    <property type="project" value="GO_Central"/>
</dbReference>
<dbReference type="GO" id="GO:0004896">
    <property type="term" value="F:cytokine receptor activity"/>
    <property type="evidence" value="ECO:0000318"/>
    <property type="project" value="GO_Central"/>
</dbReference>
<dbReference type="GO" id="GO:0042017">
    <property type="term" value="F:interleukin-22 binding"/>
    <property type="evidence" value="ECO:0000314"/>
    <property type="project" value="UniProtKB"/>
</dbReference>
<dbReference type="GO" id="GO:0042018">
    <property type="term" value="F:interleukin-22 receptor activity"/>
    <property type="evidence" value="ECO:0000314"/>
    <property type="project" value="UniProtKB"/>
</dbReference>
<dbReference type="GO" id="GO:0019221">
    <property type="term" value="P:cytokine-mediated signaling pathway"/>
    <property type="evidence" value="ECO:0000318"/>
    <property type="project" value="GO_Central"/>
</dbReference>
<dbReference type="GO" id="GO:0050728">
    <property type="term" value="P:negative regulation of inflammatory response"/>
    <property type="evidence" value="ECO:0007669"/>
    <property type="project" value="Ensembl"/>
</dbReference>
<dbReference type="FunFam" id="2.60.40.10:FF:001095">
    <property type="entry name" value="Interleukin 22 receptor, alpha 2"/>
    <property type="match status" value="1"/>
</dbReference>
<dbReference type="Gene3D" id="2.60.40.10">
    <property type="entry name" value="Immunoglobulins"/>
    <property type="match status" value="2"/>
</dbReference>
<dbReference type="InterPro" id="IPR003961">
    <property type="entry name" value="FN3_dom"/>
</dbReference>
<dbReference type="InterPro" id="IPR036116">
    <property type="entry name" value="FN3_sf"/>
</dbReference>
<dbReference type="InterPro" id="IPR013783">
    <property type="entry name" value="Ig-like_fold"/>
</dbReference>
<dbReference type="InterPro" id="IPR015373">
    <property type="entry name" value="Interferon/interleukin_rcp_dom"/>
</dbReference>
<dbReference type="InterPro" id="IPR050650">
    <property type="entry name" value="Type-II_Cytokine-TF_Rcpt"/>
</dbReference>
<dbReference type="PANTHER" id="PTHR20859">
    <property type="entry name" value="INTERFERON/INTERLEUKIN RECEPTOR"/>
    <property type="match status" value="1"/>
</dbReference>
<dbReference type="PANTHER" id="PTHR20859:SF51">
    <property type="entry name" value="INTERLEUKIN-22 RECEPTOR SUBUNIT ALPHA-2"/>
    <property type="match status" value="1"/>
</dbReference>
<dbReference type="Pfam" id="PF09294">
    <property type="entry name" value="Interfer-bind"/>
    <property type="match status" value="1"/>
</dbReference>
<dbReference type="Pfam" id="PF01108">
    <property type="entry name" value="Tissue_fac"/>
    <property type="match status" value="2"/>
</dbReference>
<dbReference type="SUPFAM" id="SSF49265">
    <property type="entry name" value="Fibronectin type III"/>
    <property type="match status" value="2"/>
</dbReference>
<evidence type="ECO:0000250" key="1"/>
<evidence type="ECO:0000250" key="2">
    <source>
        <dbReference type="UniProtKB" id="Q8N6P7"/>
    </source>
</evidence>
<evidence type="ECO:0000255" key="3"/>
<evidence type="ECO:0000269" key="4">
    <source>
    </source>
</evidence>
<evidence type="ECO:0000269" key="5">
    <source>
    </source>
</evidence>
<evidence type="ECO:0000269" key="6">
    <source>
    </source>
</evidence>
<evidence type="ECO:0000269" key="7">
    <source>
    </source>
</evidence>
<evidence type="ECO:0000269" key="8">
    <source>
    </source>
</evidence>
<evidence type="ECO:0000269" key="9">
    <source>
    </source>
</evidence>
<evidence type="ECO:0000269" key="10">
    <source ref="6"/>
</evidence>
<evidence type="ECO:0000303" key="11">
    <source>
    </source>
</evidence>
<evidence type="ECO:0000303" key="12">
    <source>
    </source>
</evidence>
<evidence type="ECO:0000303" key="13">
    <source>
    </source>
</evidence>
<evidence type="ECO:0000303" key="14">
    <source>
    </source>
</evidence>
<evidence type="ECO:0000303" key="15">
    <source>
    </source>
</evidence>
<evidence type="ECO:0000303" key="16">
    <source>
    </source>
</evidence>
<evidence type="ECO:0000305" key="17"/>
<evidence type="ECO:0007829" key="18">
    <source>
        <dbReference type="PDB" id="3G9V"/>
    </source>
</evidence>
<protein>
    <recommendedName>
        <fullName>Interleukin-22 receptor subunit alpha-2</fullName>
        <shortName>IL-22 receptor subunit alpha-2</shortName>
        <shortName>IL-22R-alpha-2</shortName>
        <shortName>IL-22RA2</shortName>
    </recommendedName>
    <alternativeName>
        <fullName>Cytokine receptor class-II member 10</fullName>
    </alternativeName>
    <alternativeName>
        <fullName>Cytokine receptor family 2 member 10</fullName>
        <shortName>CRF2-10</shortName>
    </alternativeName>
    <alternativeName>
        <fullName>Cytokine receptor family type 2, soluble 1</fullName>
        <shortName>CRF2-S1</shortName>
    </alternativeName>
    <alternativeName>
        <fullName>Interleukin-22-binding protein</fullName>
        <shortName>IL-22BP</shortName>
        <shortName>IL22BP</shortName>
    </alternativeName>
    <alternativeName>
        <fullName>ZcytoR16</fullName>
    </alternativeName>
</protein>
<feature type="signal peptide" evidence="8">
    <location>
        <begin position="1"/>
        <end position="21"/>
    </location>
</feature>
<feature type="chain" id="PRO_0000011016" description="Interleukin-22 receptor subunit alpha-2">
    <location>
        <begin position="22"/>
        <end position="263"/>
    </location>
</feature>
<feature type="domain" description="Fibronectin type-III 1">
    <location>
        <begin position="26"/>
        <end position="68"/>
    </location>
</feature>
<feature type="domain" description="Fibronectin type-III 2">
    <location>
        <begin position="100"/>
        <end position="161"/>
    </location>
</feature>
<feature type="domain" description="Fibronectin type-III 3">
    <location>
        <begin position="162"/>
        <end position="263"/>
    </location>
</feature>
<feature type="site" description="Critical for IL22-binding" evidence="1">
    <location>
        <position position="99"/>
    </location>
</feature>
<feature type="site" description="Critical for IL22-binding" evidence="1">
    <location>
        <position position="151"/>
    </location>
</feature>
<feature type="glycosylation site" description="N-linked (GlcNAc...) asparagine" evidence="3">
    <location>
        <position position="56"/>
    </location>
</feature>
<feature type="glycosylation site" description="N-linked (GlcNAc...) asparagine" evidence="3">
    <location>
        <position position="166"/>
    </location>
</feature>
<feature type="glycosylation site" description="N-linked (GlcNAc...) asparagine" evidence="3">
    <location>
        <position position="171"/>
    </location>
</feature>
<feature type="glycosylation site" description="N-linked (GlcNAc...) asparagine" evidence="3">
    <location>
        <position position="192"/>
    </location>
</feature>
<feature type="glycosylation site" description="N-linked (GlcNAc...) asparagine" evidence="3">
    <location>
        <position position="209"/>
    </location>
</feature>
<feature type="disulfide bond" evidence="2">
    <location>
        <begin position="110"/>
        <end position="118"/>
    </location>
</feature>
<feature type="disulfide bond" evidence="9">
    <location>
        <begin position="238"/>
        <end position="259"/>
    </location>
</feature>
<feature type="splice variant" id="VSP_013105" description="In isoform 2 and isoform 3." evidence="11 12 13 14 15 16">
    <location>
        <begin position="67"/>
        <end position="98"/>
    </location>
</feature>
<feature type="splice variant" id="VSP_013106" description="In isoform 3." evidence="12">
    <original>TKIDP</original>
    <variation>RAKGL</variation>
    <location>
        <begin position="158"/>
        <end position="162"/>
    </location>
</feature>
<feature type="splice variant" id="VSP_013107" description="In isoform 3." evidence="12">
    <location>
        <begin position="163"/>
        <end position="263"/>
    </location>
</feature>
<feature type="sequence variant" id="VAR_021493" description="In dbSNP:rs28385692." evidence="10">
    <original>L</original>
    <variation>P</variation>
    <location>
        <position position="16"/>
    </location>
</feature>
<feature type="sequence variant" id="VAR_021494" description="In dbSNP:rs28362173." evidence="10">
    <original>E</original>
    <variation>K</variation>
    <location>
        <position position="190"/>
    </location>
</feature>
<feature type="strand" evidence="18">
    <location>
        <begin position="32"/>
        <end position="39"/>
    </location>
</feature>
<feature type="strand" evidence="18">
    <location>
        <begin position="42"/>
        <end position="48"/>
    </location>
</feature>
<feature type="strand" evidence="18">
    <location>
        <begin position="59"/>
        <end position="66"/>
    </location>
</feature>
<feature type="strand" evidence="18">
    <location>
        <begin position="105"/>
        <end position="113"/>
    </location>
</feature>
<feature type="strand" evidence="18">
    <location>
        <begin position="116"/>
        <end position="119"/>
    </location>
</feature>
<feature type="helix" evidence="18">
    <location>
        <begin position="122"/>
        <end position="124"/>
    </location>
</feature>
<feature type="strand" evidence="18">
    <location>
        <begin position="131"/>
        <end position="139"/>
    </location>
</feature>
<feature type="helix" evidence="18">
    <location>
        <begin position="154"/>
        <end position="157"/>
    </location>
</feature>
<feature type="strand" evidence="18">
    <location>
        <begin position="164"/>
        <end position="166"/>
    </location>
</feature>
<feature type="strand" evidence="18">
    <location>
        <begin position="177"/>
        <end position="179"/>
    </location>
</feature>
<feature type="helix" evidence="18">
    <location>
        <begin position="184"/>
        <end position="187"/>
    </location>
</feature>
<feature type="helix" evidence="18">
    <location>
        <begin position="195"/>
        <end position="198"/>
    </location>
</feature>
<feature type="strand" evidence="18">
    <location>
        <begin position="202"/>
        <end position="207"/>
    </location>
</feature>
<feature type="strand" evidence="18">
    <location>
        <begin position="216"/>
        <end position="223"/>
    </location>
</feature>
<feature type="strand" evidence="18">
    <location>
        <begin position="239"/>
        <end position="245"/>
    </location>
</feature>
<feature type="turn" evidence="18">
    <location>
        <begin position="246"/>
        <end position="249"/>
    </location>
</feature>
<gene>
    <name type="primary">IL22RA2</name>
    <name type="ORF">UNQ5793/PRO19598/PRO19822</name>
</gene>
<organism>
    <name type="scientific">Homo sapiens</name>
    <name type="common">Human</name>
    <dbReference type="NCBI Taxonomy" id="9606"/>
    <lineage>
        <taxon>Eukaryota</taxon>
        <taxon>Metazoa</taxon>
        <taxon>Chordata</taxon>
        <taxon>Craniata</taxon>
        <taxon>Vertebrata</taxon>
        <taxon>Euteleostomi</taxon>
        <taxon>Mammalia</taxon>
        <taxon>Eutheria</taxon>
        <taxon>Euarchontoglires</taxon>
        <taxon>Primates</taxon>
        <taxon>Haplorrhini</taxon>
        <taxon>Catarrhini</taxon>
        <taxon>Hominidae</taxon>
        <taxon>Homo</taxon>
    </lineage>
</organism>
<accession>Q969J5</accession>
<accession>Q08AH7</accession>
<accession>Q6UWM1</accession>
<accession>Q96A41</accession>
<accession>Q96QR0</accession>
<name>I22R2_HUMAN</name>
<proteinExistence type="evidence at protein level"/>
<keyword id="KW-0002">3D-structure</keyword>
<keyword id="KW-0025">Alternative splicing</keyword>
<keyword id="KW-0903">Direct protein sequencing</keyword>
<keyword id="KW-1015">Disulfide bond</keyword>
<keyword id="KW-0325">Glycoprotein</keyword>
<keyword id="KW-0675">Receptor</keyword>
<keyword id="KW-1185">Reference proteome</keyword>
<keyword id="KW-0677">Repeat</keyword>
<keyword id="KW-0964">Secreted</keyword>
<keyword id="KW-0732">Signal</keyword>
<reference key="1">
    <citation type="journal article" date="2001" name="Genes Immun.">
        <title>A novel, soluble homologue of the human IL-10 receptor with preferential expression in placenta.</title>
        <authorList>
            <person name="Gruenberg B.H."/>
            <person name="Schoenemeyer A."/>
            <person name="Weiss B."/>
            <person name="Toschi L."/>
            <person name="Kunz S."/>
            <person name="Wolk K."/>
            <person name="Asadullah K."/>
            <person name="Sabat R."/>
        </authorList>
    </citation>
    <scope>NUCLEOTIDE SEQUENCE [MRNA] (ISOFORMS 1 AND 2)</scope>
    <scope>TISSUE SPECIFICITY</scope>
    <source>
        <tissue>Mammary gland</tissue>
        <tissue>Placenta</tissue>
    </source>
</reference>
<reference key="2">
    <citation type="journal article" date="2001" name="J. Immunol.">
        <title>Identification, cloning, and characterization of a novel soluble receptor that binds IL-22 and neutralizes its activity.</title>
        <authorList>
            <person name="Kotenko S.V."/>
            <person name="Izotova L.S."/>
            <person name="Mirochnitchenko O.V."/>
            <person name="Esterova E."/>
            <person name="Dickensheets H."/>
            <person name="Donnelly R.P."/>
            <person name="Pestka S."/>
        </authorList>
    </citation>
    <scope>NUCLEOTIDE SEQUENCE [MRNA] (ISOFORMS 1; 2 AND 3)</scope>
    <scope>FUNCTION</scope>
</reference>
<reference key="3">
    <citation type="journal article" date="2001" name="J. Immunol.">
        <title>Cloning and characterization of IL-22 binding protein, a natural antagonist of IL-10-related T cell-derived inducible factor/IL-22.</title>
        <authorList>
            <person name="Dumoutier L."/>
            <person name="Lejeune D."/>
            <person name="Colau D."/>
            <person name="Renauld J.-C."/>
        </authorList>
    </citation>
    <scope>NUCLEOTIDE SEQUENCE [MRNA] (ISOFORMS 1 AND 2)</scope>
    <scope>FUNCTION</scope>
    <source>
        <tissue>Mammary gland</tissue>
    </source>
</reference>
<reference key="4">
    <citation type="journal article" date="2001" name="Proc. Natl. Acad. Sci. U.S.A.">
        <title>A soluble class II cytokine receptor, IL-22RA2, is a naturally occurring IL-22 antagonist.</title>
        <authorList>
            <person name="Xu W."/>
            <person name="Presnell S.R."/>
            <person name="Parrish-Novak J."/>
            <person name="Kindsvogel W."/>
            <person name="Jaspers S."/>
            <person name="Chen Z."/>
            <person name="Dillon S.R."/>
            <person name="Gao Z."/>
            <person name="Gilbert T."/>
            <person name="Madden K."/>
            <person name="Schlutsmeyer S."/>
            <person name="Yao L."/>
            <person name="Whitmore T.E."/>
            <person name="Chandrasekher Y."/>
            <person name="Grant F.J."/>
            <person name="Maurer M."/>
            <person name="Jelinek L."/>
            <person name="Storey H."/>
            <person name="Brender T."/>
            <person name="Hammond A."/>
            <person name="Topouzis S."/>
            <person name="Clegg C.H."/>
            <person name="Foster D.C."/>
        </authorList>
    </citation>
    <scope>NUCLEOTIDE SEQUENCE [MRNA] (ISOFORM 2)</scope>
    <scope>FUNCTION</scope>
    <scope>TISSUE SPECIFICITY</scope>
</reference>
<reference key="5">
    <citation type="journal article" date="2003" name="Genome Res.">
        <title>The secreted protein discovery initiative (SPDI), a large-scale effort to identify novel human secreted and transmembrane proteins: a bioinformatics assessment.</title>
        <authorList>
            <person name="Clark H.F."/>
            <person name="Gurney A.L."/>
            <person name="Abaya E."/>
            <person name="Baker K."/>
            <person name="Baldwin D.T."/>
            <person name="Brush J."/>
            <person name="Chen J."/>
            <person name="Chow B."/>
            <person name="Chui C."/>
            <person name="Crowley C."/>
            <person name="Currell B."/>
            <person name="Deuel B."/>
            <person name="Dowd P."/>
            <person name="Eaton D."/>
            <person name="Foster J.S."/>
            <person name="Grimaldi C."/>
            <person name="Gu Q."/>
            <person name="Hass P.E."/>
            <person name="Heldens S."/>
            <person name="Huang A."/>
            <person name="Kim H.S."/>
            <person name="Klimowski L."/>
            <person name="Jin Y."/>
            <person name="Johnson S."/>
            <person name="Lee J."/>
            <person name="Lewis L."/>
            <person name="Liao D."/>
            <person name="Mark M.R."/>
            <person name="Robbie E."/>
            <person name="Sanchez C."/>
            <person name="Schoenfeld J."/>
            <person name="Seshagiri S."/>
            <person name="Simmons L."/>
            <person name="Singh J."/>
            <person name="Smith V."/>
            <person name="Stinson J."/>
            <person name="Vagts A."/>
            <person name="Vandlen R.L."/>
            <person name="Watanabe C."/>
            <person name="Wieand D."/>
            <person name="Woods K."/>
            <person name="Xie M.-H."/>
            <person name="Yansura D.G."/>
            <person name="Yi S."/>
            <person name="Yu G."/>
            <person name="Yuan J."/>
            <person name="Zhang M."/>
            <person name="Zhang Z."/>
            <person name="Goddard A.D."/>
            <person name="Wood W.I."/>
            <person name="Godowski P.J."/>
            <person name="Gray A.M."/>
        </authorList>
    </citation>
    <scope>NUCLEOTIDE SEQUENCE [LARGE SCALE MRNA] (ISOFORMS 1 AND 2)</scope>
</reference>
<reference key="6">
    <citation type="submission" date="2004-10" db="EMBL/GenBank/DDBJ databases">
        <authorList>
            <consortium name="SeattleSNPs variation discovery resource"/>
        </authorList>
    </citation>
    <scope>NUCLEOTIDE SEQUENCE [GENOMIC DNA]</scope>
    <scope>VARIANTS PRO-16 AND LYS-190</scope>
</reference>
<reference key="7">
    <citation type="journal article" date="2003" name="Nature">
        <title>The DNA sequence and analysis of human chromosome 6.</title>
        <authorList>
            <person name="Mungall A.J."/>
            <person name="Palmer S.A."/>
            <person name="Sims S.K."/>
            <person name="Edwards C.A."/>
            <person name="Ashurst J.L."/>
            <person name="Wilming L."/>
            <person name="Jones M.C."/>
            <person name="Horton R."/>
            <person name="Hunt S.E."/>
            <person name="Scott C.E."/>
            <person name="Gilbert J.G.R."/>
            <person name="Clamp M.E."/>
            <person name="Bethel G."/>
            <person name="Milne S."/>
            <person name="Ainscough R."/>
            <person name="Almeida J.P."/>
            <person name="Ambrose K.D."/>
            <person name="Andrews T.D."/>
            <person name="Ashwell R.I.S."/>
            <person name="Babbage A.K."/>
            <person name="Bagguley C.L."/>
            <person name="Bailey J."/>
            <person name="Banerjee R."/>
            <person name="Barker D.J."/>
            <person name="Barlow K.F."/>
            <person name="Bates K."/>
            <person name="Beare D.M."/>
            <person name="Beasley H."/>
            <person name="Beasley O."/>
            <person name="Bird C.P."/>
            <person name="Blakey S.E."/>
            <person name="Bray-Allen S."/>
            <person name="Brook J."/>
            <person name="Brown A.J."/>
            <person name="Brown J.Y."/>
            <person name="Burford D.C."/>
            <person name="Burrill W."/>
            <person name="Burton J."/>
            <person name="Carder C."/>
            <person name="Carter N.P."/>
            <person name="Chapman J.C."/>
            <person name="Clark S.Y."/>
            <person name="Clark G."/>
            <person name="Clee C.M."/>
            <person name="Clegg S."/>
            <person name="Cobley V."/>
            <person name="Collier R.E."/>
            <person name="Collins J.E."/>
            <person name="Colman L.K."/>
            <person name="Corby N.R."/>
            <person name="Coville G.J."/>
            <person name="Culley K.M."/>
            <person name="Dhami P."/>
            <person name="Davies J."/>
            <person name="Dunn M."/>
            <person name="Earthrowl M.E."/>
            <person name="Ellington A.E."/>
            <person name="Evans K.A."/>
            <person name="Faulkner L."/>
            <person name="Francis M.D."/>
            <person name="Frankish A."/>
            <person name="Frankland J."/>
            <person name="French L."/>
            <person name="Garner P."/>
            <person name="Garnett J."/>
            <person name="Ghori M.J."/>
            <person name="Gilby L.M."/>
            <person name="Gillson C.J."/>
            <person name="Glithero R.J."/>
            <person name="Grafham D.V."/>
            <person name="Grant M."/>
            <person name="Gribble S."/>
            <person name="Griffiths C."/>
            <person name="Griffiths M.N.D."/>
            <person name="Hall R."/>
            <person name="Halls K.S."/>
            <person name="Hammond S."/>
            <person name="Harley J.L."/>
            <person name="Hart E.A."/>
            <person name="Heath P.D."/>
            <person name="Heathcott R."/>
            <person name="Holmes S.J."/>
            <person name="Howden P.J."/>
            <person name="Howe K.L."/>
            <person name="Howell G.R."/>
            <person name="Huckle E."/>
            <person name="Humphray S.J."/>
            <person name="Humphries M.D."/>
            <person name="Hunt A.R."/>
            <person name="Johnson C.M."/>
            <person name="Joy A.A."/>
            <person name="Kay M."/>
            <person name="Keenan S.J."/>
            <person name="Kimberley A.M."/>
            <person name="King A."/>
            <person name="Laird G.K."/>
            <person name="Langford C."/>
            <person name="Lawlor S."/>
            <person name="Leongamornlert D.A."/>
            <person name="Leversha M."/>
            <person name="Lloyd C.R."/>
            <person name="Lloyd D.M."/>
            <person name="Loveland J.E."/>
            <person name="Lovell J."/>
            <person name="Martin S."/>
            <person name="Mashreghi-Mohammadi M."/>
            <person name="Maslen G.L."/>
            <person name="Matthews L."/>
            <person name="McCann O.T."/>
            <person name="McLaren S.J."/>
            <person name="McLay K."/>
            <person name="McMurray A."/>
            <person name="Moore M.J.F."/>
            <person name="Mullikin J.C."/>
            <person name="Niblett D."/>
            <person name="Nickerson T."/>
            <person name="Novik K.L."/>
            <person name="Oliver K."/>
            <person name="Overton-Larty E.K."/>
            <person name="Parker A."/>
            <person name="Patel R."/>
            <person name="Pearce A.V."/>
            <person name="Peck A.I."/>
            <person name="Phillimore B.J.C.T."/>
            <person name="Phillips S."/>
            <person name="Plumb R.W."/>
            <person name="Porter K.M."/>
            <person name="Ramsey Y."/>
            <person name="Ranby S.A."/>
            <person name="Rice C.M."/>
            <person name="Ross M.T."/>
            <person name="Searle S.M."/>
            <person name="Sehra H.K."/>
            <person name="Sheridan E."/>
            <person name="Skuce C.D."/>
            <person name="Smith S."/>
            <person name="Smith M."/>
            <person name="Spraggon L."/>
            <person name="Squares S.L."/>
            <person name="Steward C.A."/>
            <person name="Sycamore N."/>
            <person name="Tamlyn-Hall G."/>
            <person name="Tester J."/>
            <person name="Theaker A.J."/>
            <person name="Thomas D.W."/>
            <person name="Thorpe A."/>
            <person name="Tracey A."/>
            <person name="Tromans A."/>
            <person name="Tubby B."/>
            <person name="Wall M."/>
            <person name="Wallis J.M."/>
            <person name="West A.P."/>
            <person name="White S.S."/>
            <person name="Whitehead S.L."/>
            <person name="Whittaker H."/>
            <person name="Wild A."/>
            <person name="Willey D.J."/>
            <person name="Wilmer T.E."/>
            <person name="Wood J.M."/>
            <person name="Wray P.W."/>
            <person name="Wyatt J.C."/>
            <person name="Young L."/>
            <person name="Younger R.M."/>
            <person name="Bentley D.R."/>
            <person name="Coulson A."/>
            <person name="Durbin R.M."/>
            <person name="Hubbard T."/>
            <person name="Sulston J.E."/>
            <person name="Dunham I."/>
            <person name="Rogers J."/>
            <person name="Beck S."/>
        </authorList>
    </citation>
    <scope>NUCLEOTIDE SEQUENCE [LARGE SCALE GENOMIC DNA]</scope>
</reference>
<reference key="8">
    <citation type="submission" date="2005-09" db="EMBL/GenBank/DDBJ databases">
        <authorList>
            <person name="Mural R.J."/>
            <person name="Istrail S."/>
            <person name="Sutton G.G."/>
            <person name="Florea L."/>
            <person name="Halpern A.L."/>
            <person name="Mobarry C.M."/>
            <person name="Lippert R."/>
            <person name="Walenz B."/>
            <person name="Shatkay H."/>
            <person name="Dew I."/>
            <person name="Miller J.R."/>
            <person name="Flanigan M.J."/>
            <person name="Edwards N.J."/>
            <person name="Bolanos R."/>
            <person name="Fasulo D."/>
            <person name="Halldorsson B.V."/>
            <person name="Hannenhalli S."/>
            <person name="Turner R."/>
            <person name="Yooseph S."/>
            <person name="Lu F."/>
            <person name="Nusskern D.R."/>
            <person name="Shue B.C."/>
            <person name="Zheng X.H."/>
            <person name="Zhong F."/>
            <person name="Delcher A.L."/>
            <person name="Huson D.H."/>
            <person name="Kravitz S.A."/>
            <person name="Mouchard L."/>
            <person name="Reinert K."/>
            <person name="Remington K.A."/>
            <person name="Clark A.G."/>
            <person name="Waterman M.S."/>
            <person name="Eichler E.E."/>
            <person name="Adams M.D."/>
            <person name="Hunkapiller M.W."/>
            <person name="Myers E.W."/>
            <person name="Venter J.C."/>
        </authorList>
    </citation>
    <scope>NUCLEOTIDE SEQUENCE [LARGE SCALE GENOMIC DNA]</scope>
</reference>
<reference key="9">
    <citation type="journal article" date="2004" name="Genome Res.">
        <title>The status, quality, and expansion of the NIH full-length cDNA project: the Mammalian Gene Collection (MGC).</title>
        <authorList>
            <consortium name="The MGC Project Team"/>
        </authorList>
    </citation>
    <scope>NUCLEOTIDE SEQUENCE [LARGE SCALE MRNA] (ISOFORM 2)</scope>
</reference>
<reference key="10">
    <citation type="journal article" date="2004" name="Protein Sci.">
        <title>Signal peptide prediction based on analysis of experimentally verified cleavage sites.</title>
        <authorList>
            <person name="Zhang Z."/>
            <person name="Henzel W.J."/>
        </authorList>
    </citation>
    <scope>PROTEIN SEQUENCE OF 22-36</scope>
</reference>
<reference key="11">
    <citation type="journal article" date="2004" name="Genes Immun.">
        <title>Cloning of murine IL-22 receptor alpha 2 and comparison with its human counterpart.</title>
        <authorList>
            <person name="Weiss B."/>
            <person name="Wolk K."/>
            <person name="Gruenberg B.H."/>
            <person name="Volk H.D."/>
            <person name="Sterry W."/>
            <person name="Asadullah K."/>
            <person name="Sabat R."/>
        </authorList>
    </citation>
    <scope>TISSUE SPECIFICITY</scope>
</reference>
<reference key="12">
    <citation type="journal article" date="2003" name="Genes Immun.">
        <title>Cloning and characterization of mouse IL-22 binding protein.</title>
        <authorList>
            <person name="Wei C.-C."/>
            <person name="Ho T.-W."/>
            <person name="Liang W.-G."/>
            <person name="Chen G.-Y."/>
            <person name="Chang M.-S."/>
        </authorList>
    </citation>
    <scope>SUBCELLULAR LOCATION</scope>
</reference>
<reference key="13">
    <citation type="journal article" date="2009" name="FEBS Lett.">
        <title>Crystal structure of a soluble decoy receptor IL-22BP bound to interleukin-22.</title>
        <authorList>
            <person name="de Moura P.R."/>
            <person name="Watanabe L."/>
            <person name="Bleicher L."/>
            <person name="Colau D."/>
            <person name="Dumoutier L."/>
            <person name="Lemaire M.M."/>
            <person name="Renauld J.C."/>
            <person name="Polikarpov I."/>
        </authorList>
    </citation>
    <scope>X-RAY CRYSTALLOGRAPHY (2.76 ANGSTROMS) OF 21-231 (ISOFORM 2)</scope>
    <scope>DISULFIDE BOND</scope>
</reference>
<comment type="function">
    <text>Isoform 2 is a receptor for IL22. Binds to IL22, prevents interaction with the functional IL-22R complex and blocks the activity of IL22 (in vitro). May play an important role as an IL22 antagonist in the regulation of inflammatory responses.</text>
</comment>
<comment type="function">
    <text>Isoform 1 may play a role in establishing and maintaining successful pregnancy.</text>
</comment>
<comment type="subcellular location">
    <subcellularLocation>
        <location evidence="6">Secreted</location>
    </subcellularLocation>
</comment>
<comment type="alternative products">
    <event type="alternative splicing"/>
    <isoform>
        <id>Q969J5-1</id>
        <name>1</name>
        <name>Long</name>
        <name>CRF2-10L</name>
        <name>CRF2-s1-long</name>
        <sequence type="displayed"/>
    </isoform>
    <isoform>
        <id>Q969J5-2</id>
        <name>2</name>
        <name>Short</name>
        <name>CRF2-10</name>
        <name>CRF2-s1-short</name>
        <sequence type="described" ref="VSP_013105"/>
    </isoform>
    <isoform>
        <id>Q969J5-3</id>
        <name>3</name>
        <name>CRF2-10S</name>
        <sequence type="described" ref="VSP_013105 VSP_013106 VSP_013107"/>
    </isoform>
</comment>
<comment type="tissue specificity">
    <text evidence="4 5 7">Expressed in placenta, spleen, breast, skin and lung. Also detected in intestinal tract, testis, brain, heart and thymus. No expression found in prostate, bladder, kidney, ovary, muscle, bone marrow, liver and uterus. Isoform 1 is expressed only in placenta. Isoform 2 is expressed in placenta and breast and at lower level in spleen, skin, thymus and stomach.</text>
</comment>
<comment type="similarity">
    <text evidence="17">Belongs to the type II cytokine receptor family.</text>
</comment>
<comment type="sequence caution" evidence="17">
    <conflict type="erroneous initiation">
        <sequence resource="EMBL-CDS" id="AAQ89097"/>
    </conflict>
</comment>
<sequence>MMPKHCFLGFLISFFLTGVAGTQSTHESLKPQRVQFQSRNFHNILQWQPGRALTGNSSVYFVQYKIMFSCSMKSSHQKPSGCWQHISCNFPGCRTLAKYGQRQWKNKEDCWGTQELSCDLTSETSDIQEPYYGRVRAASAGSYSEWSMTPRFTPWWETKIDPPVMNITQVNGSLLVILHAPNLPYRYQKEKNVSIEDYYELLYRVFIINNSLEKEQKVYEGAHRAVEIEALTPHSSYCVVAEIYQPMLDRRSQRSEERCVEIP</sequence>